<evidence type="ECO:0000269" key="1">
    <source>
    </source>
</evidence>
<evidence type="ECO:0000269" key="2">
    <source>
    </source>
</evidence>
<evidence type="ECO:0000303" key="3">
    <source>
    </source>
</evidence>
<evidence type="ECO:0000303" key="4">
    <source>
    </source>
</evidence>
<evidence type="ECO:0000305" key="5"/>
<evidence type="ECO:0000305" key="6">
    <source>
    </source>
</evidence>
<evidence type="ECO:0000305" key="7">
    <source>
    </source>
</evidence>
<evidence type="ECO:0007744" key="8">
    <source>
        <dbReference type="PDB" id="6CSE"/>
    </source>
</evidence>
<evidence type="ECO:0007744" key="9">
    <source>
        <dbReference type="PDB" id="6CSF"/>
    </source>
</evidence>
<evidence type="ECO:0007829" key="10">
    <source>
        <dbReference type="PDB" id="6CSE"/>
    </source>
</evidence>
<evidence type="ECO:0007829" key="11">
    <source>
        <dbReference type="PDB" id="6CSF"/>
    </source>
</evidence>
<accession>Q6LX42</accession>
<feature type="chain" id="PRO_0000415441" description="Sodium/alanine symporter AgcS">
    <location>
        <begin position="1"/>
        <end position="453"/>
    </location>
</feature>
<feature type="topological domain" description="Extracellular" evidence="2 8">
    <location>
        <begin position="1"/>
        <end position="17"/>
    </location>
</feature>
<feature type="transmembrane region" description="Helical" evidence="2 8">
    <location>
        <begin position="18"/>
        <end position="32"/>
    </location>
</feature>
<feature type="topological domain" description="Cytoplasmic" evidence="2 8">
    <location>
        <begin position="33"/>
        <end position="67"/>
    </location>
</feature>
<feature type="transmembrane region" description="Helical" evidence="2 8">
    <location>
        <begin position="68"/>
        <end position="89"/>
    </location>
</feature>
<feature type="topological domain" description="Extracellular" evidence="2 8">
    <location>
        <begin position="90"/>
        <end position="92"/>
    </location>
</feature>
<feature type="transmembrane region" description="Helical" evidence="2 8">
    <location>
        <begin position="93"/>
        <end position="111"/>
    </location>
</feature>
<feature type="topological domain" description="Cytoplasmic" evidence="2 8">
    <location>
        <begin position="112"/>
        <end position="148"/>
    </location>
</feature>
<feature type="transmembrane region" description="Helical" evidence="2 8">
    <location>
        <begin position="149"/>
        <end position="179"/>
    </location>
</feature>
<feature type="topological domain" description="Extracellular" evidence="2 8">
    <location>
        <begin position="180"/>
        <end position="186"/>
    </location>
</feature>
<feature type="transmembrane region" description="Helical" evidence="2 8">
    <location>
        <begin position="187"/>
        <end position="202"/>
    </location>
</feature>
<feature type="topological domain" description="Cytoplasmic" evidence="2 8">
    <location>
        <begin position="203"/>
        <end position="206"/>
    </location>
</feature>
<feature type="transmembrane region" description="Helical" evidence="2 8">
    <location>
        <begin position="207"/>
        <end position="233"/>
    </location>
</feature>
<feature type="topological domain" description="Extracellular" evidence="2 8">
    <location>
        <begin position="234"/>
        <end position="258"/>
    </location>
</feature>
<feature type="transmembrane region" description="Helical" evidence="2 8">
    <location>
        <begin position="259"/>
        <end position="274"/>
    </location>
</feature>
<feature type="topological domain" description="Cytoplasmic" evidence="2 8">
    <location>
        <begin position="275"/>
        <end position="300"/>
    </location>
</feature>
<feature type="transmembrane region" description="Helical" evidence="2 8">
    <location>
        <begin position="301"/>
        <end position="322"/>
    </location>
</feature>
<feature type="topological domain" description="Extracellular" evidence="2 8">
    <location>
        <begin position="323"/>
        <end position="350"/>
    </location>
</feature>
<feature type="transmembrane region" description="Helical" evidence="2 8">
    <location>
        <begin position="351"/>
        <end position="378"/>
    </location>
</feature>
<feature type="topological domain" description="Cytoplasmic" evidence="2 8">
    <location>
        <begin position="379"/>
        <end position="386"/>
    </location>
</feature>
<feature type="transmembrane region" description="Helical" evidence="2 8">
    <location>
        <begin position="387"/>
        <end position="403"/>
    </location>
</feature>
<feature type="topological domain" description="Extracellular" evidence="2 8">
    <location>
        <begin position="404"/>
        <end position="408"/>
    </location>
</feature>
<feature type="transmembrane region" description="Helical" evidence="2 8">
    <location>
        <begin position="409"/>
        <end position="430"/>
    </location>
</feature>
<feature type="topological domain" description="Cytoplasmic" evidence="2 8">
    <location>
        <begin position="431"/>
        <end position="453"/>
    </location>
</feature>
<feature type="binding site" evidence="2 9">
    <location>
        <position position="75"/>
    </location>
    <ligand>
        <name>D-alanine</name>
        <dbReference type="ChEBI" id="CHEBI:57416"/>
    </ligand>
</feature>
<feature type="binding site" evidence="2 8">
    <location>
        <position position="75"/>
    </location>
    <ligand>
        <name>L-alanine</name>
        <dbReference type="ChEBI" id="CHEBI:57972"/>
    </ligand>
</feature>
<feature type="binding site" evidence="2 8">
    <location>
        <position position="79"/>
    </location>
    <ligand>
        <name>L-alanine</name>
        <dbReference type="ChEBI" id="CHEBI:57972"/>
    </ligand>
</feature>
<feature type="binding site" evidence="2 9">
    <location>
        <position position="80"/>
    </location>
    <ligand>
        <name>D-alanine</name>
        <dbReference type="ChEBI" id="CHEBI:57416"/>
    </ligand>
</feature>
<feature type="binding site" evidence="2 9">
    <location>
        <position position="170"/>
    </location>
    <ligand>
        <name>D-alanine</name>
        <dbReference type="ChEBI" id="CHEBI:57416"/>
    </ligand>
</feature>
<feature type="binding site" evidence="2 8">
    <location>
        <position position="170"/>
    </location>
    <ligand>
        <name>L-alanine</name>
        <dbReference type="ChEBI" id="CHEBI:57972"/>
    </ligand>
</feature>
<feature type="binding site" evidence="2 8">
    <location>
        <begin position="273"/>
        <end position="276"/>
    </location>
    <ligand>
        <name>L-alanine</name>
        <dbReference type="ChEBI" id="CHEBI:57972"/>
    </ligand>
</feature>
<feature type="binding site" evidence="2 9">
    <location>
        <begin position="273"/>
        <end position="274"/>
    </location>
    <ligand>
        <name>D-alanine</name>
        <dbReference type="ChEBI" id="CHEBI:57416"/>
    </ligand>
</feature>
<feature type="mutagenesis site" description="Markedly reduces L-alanine uptake; when associated with A-274 and A-308." evidence="2">
    <original>N</original>
    <variation>A</variation>
    <location>
        <position position="80"/>
    </location>
</feature>
<feature type="mutagenesis site" description="Shows poor substrate selectivity, allowing additional amino acids such as L-valine and L-leucine to be efficiently transported. Decreases L-alanine uptake." evidence="2">
    <original>I</original>
    <variation>A</variation>
    <location>
        <position position="165"/>
    </location>
</feature>
<feature type="mutagenesis site" description="Shows poor substrate selectivity, allowing additional amino acids such as L-valine and L-leucine to be efficiently transported. Decreases L-alanine uptake." evidence="2">
    <original>F</original>
    <variation>A</variation>
    <location>
        <position position="273"/>
    </location>
</feature>
<feature type="mutagenesis site" description="Markedly reduces L-alanine uptake; when associated with A-80 and A-308." evidence="2">
    <original>S</original>
    <variation>A</variation>
    <location>
        <position position="274"/>
    </location>
</feature>
<feature type="mutagenesis site" description="Markedly reduces L-alanine uptake; when associated with A-80 and A-274." evidence="2">
    <original>D</original>
    <variation>A</variation>
    <location>
        <position position="308"/>
    </location>
</feature>
<feature type="mutagenesis site" description="Does not change uptake of L-alanine, but reduces the ability to transport D-alanine." evidence="2">
    <original>W</original>
    <variation>Q</variation>
    <location>
        <position position="370"/>
    </location>
</feature>
<feature type="helix" evidence="10">
    <location>
        <begin position="18"/>
        <end position="33"/>
    </location>
</feature>
<feature type="helix" evidence="10">
    <location>
        <begin position="37"/>
        <end position="49"/>
    </location>
</feature>
<feature type="strand" evidence="10">
    <location>
        <begin position="58"/>
        <end position="62"/>
    </location>
</feature>
<feature type="helix" evidence="10">
    <location>
        <begin position="64"/>
        <end position="75"/>
    </location>
</feature>
<feature type="helix" evidence="10">
    <location>
        <begin position="78"/>
        <end position="91"/>
    </location>
</feature>
<feature type="helix" evidence="10">
    <location>
        <begin position="95"/>
        <end position="116"/>
    </location>
</feature>
<feature type="strand" evidence="10">
    <location>
        <begin position="124"/>
        <end position="126"/>
    </location>
</feature>
<feature type="helix" evidence="10">
    <location>
        <begin position="133"/>
        <end position="138"/>
    </location>
</feature>
<feature type="helix" evidence="10">
    <location>
        <begin position="147"/>
        <end position="166"/>
    </location>
</feature>
<feature type="helix" evidence="10">
    <location>
        <begin position="168"/>
        <end position="181"/>
    </location>
</feature>
<feature type="helix" evidence="10">
    <location>
        <begin position="186"/>
        <end position="202"/>
    </location>
</feature>
<feature type="helix" evidence="10">
    <location>
        <begin position="205"/>
        <end position="233"/>
    </location>
</feature>
<feature type="helix" evidence="10">
    <location>
        <begin position="238"/>
        <end position="247"/>
    </location>
</feature>
<feature type="strand" evidence="11">
    <location>
        <begin position="248"/>
        <end position="250"/>
    </location>
</feature>
<feature type="strand" evidence="10">
    <location>
        <begin position="253"/>
        <end position="257"/>
    </location>
</feature>
<feature type="helix" evidence="10">
    <location>
        <begin position="259"/>
        <end position="275"/>
    </location>
</feature>
<feature type="helix" evidence="10">
    <location>
        <begin position="283"/>
        <end position="287"/>
    </location>
</feature>
<feature type="helix" evidence="10">
    <location>
        <begin position="294"/>
        <end position="301"/>
    </location>
</feature>
<feature type="helix" evidence="10">
    <location>
        <begin position="303"/>
        <end position="308"/>
    </location>
</feature>
<feature type="turn" evidence="10">
    <location>
        <begin position="309"/>
        <end position="311"/>
    </location>
</feature>
<feature type="helix" evidence="10">
    <location>
        <begin position="312"/>
        <end position="326"/>
    </location>
</feature>
<feature type="helix" evidence="11">
    <location>
        <begin position="331"/>
        <end position="333"/>
    </location>
</feature>
<feature type="helix" evidence="10">
    <location>
        <begin position="337"/>
        <end position="347"/>
    </location>
</feature>
<feature type="helix" evidence="10">
    <location>
        <begin position="351"/>
        <end position="382"/>
    </location>
</feature>
<feature type="helix" evidence="10">
    <location>
        <begin position="383"/>
        <end position="385"/>
    </location>
</feature>
<feature type="helix" evidence="10">
    <location>
        <begin position="387"/>
        <end position="403"/>
    </location>
</feature>
<feature type="helix" evidence="10">
    <location>
        <begin position="409"/>
        <end position="430"/>
    </location>
</feature>
<feature type="helix" evidence="10">
    <location>
        <begin position="432"/>
        <end position="445"/>
    </location>
</feature>
<feature type="turn" evidence="10">
    <location>
        <begin position="446"/>
        <end position="449"/>
    </location>
</feature>
<sequence length="453" mass="47526">MDFVSLVNTVNSFVWGPYMLVLLLGTGIFLTLRLGFMQIHTLPYALKLAFSKHQDETSEGDISHFQALMTALAATIGTGNIAGVATAYVLGGPGAIFWMWVTAFFGMATKYAEAVLAIKYRTVDDNGEMAGGPMYFLEKGLPDHGLGKILGVAFAFFGAFAAFGIGNMVQTNSVADAVASNFGVDPLITGFVLAIFTAAVILGGIKSIGKATGIIVPFMAVFYILAGLVILAMNIGYIIPAFGTIFSSAFNFSAGFGALIGTAIMWGVKRGVFSNEAGLGSAPIAAAAAKTDHPGRQALVSMTGTFLDTIVVCTITGLVLTIAGLKAFPGLTDLTGASLTAASFDALMPMGGLIVTIGLVFFAYSTVLGWSYYGEKCFEYLIGTKGIRLYRIAFVLVAFWGATASLPLVWNIADTLNGAMAIPNLIGLLLLSGVVVSETKAFNEIRKNEAKNA</sequence>
<reference key="1">
    <citation type="journal article" date="2004" name="J. Bacteriol.">
        <title>Complete genome sequence of the genetically tractable hydrogenotrophic methanogen Methanococcus maripaludis.</title>
        <authorList>
            <person name="Hendrickson E.L."/>
            <person name="Kaul R."/>
            <person name="Zhou Y."/>
            <person name="Bovee D."/>
            <person name="Chapman P."/>
            <person name="Chung J."/>
            <person name="Conway de Macario E."/>
            <person name="Dodsworth J.A."/>
            <person name="Gillett W."/>
            <person name="Graham D.E."/>
            <person name="Hackett M."/>
            <person name="Haydock A.K."/>
            <person name="Kang A."/>
            <person name="Land M.L."/>
            <person name="Levy R."/>
            <person name="Lie T.J."/>
            <person name="Major T.A."/>
            <person name="Moore B.C."/>
            <person name="Porat I."/>
            <person name="Palmeiri A."/>
            <person name="Rouse G."/>
            <person name="Saenphimmachak C."/>
            <person name="Soell D."/>
            <person name="Van Dien S."/>
            <person name="Wang T."/>
            <person name="Whitman W.B."/>
            <person name="Xia Q."/>
            <person name="Zhang Y."/>
            <person name="Larimer F.W."/>
            <person name="Olson M.V."/>
            <person name="Leigh J.A."/>
        </authorList>
    </citation>
    <scope>NUCLEOTIDE SEQUENCE [LARGE SCALE GENOMIC DNA]</scope>
    <source>
        <strain>DSM 14266 / JCM 13030 / NBRC 101832 / S2 / LL</strain>
    </source>
</reference>
<reference key="2">
    <citation type="journal article" date="2005" name="J. Bacteriol.">
        <title>Markerless mutagenesis in Methanococcus maripaludis demonstrates roles for alanine dehydrogenase, alanine racemase, and alanine permease.</title>
        <authorList>
            <person name="Moore B.C."/>
            <person name="Leigh J.A."/>
        </authorList>
    </citation>
    <scope>FUNCTION</scope>
    <scope>DISRUPTION PHENOTYPE</scope>
    <source>
        <strain>DSM 14266 / JCM 13030 / NBRC 101832 / S2 / LL</strain>
    </source>
</reference>
<reference evidence="8 9" key="3">
    <citation type="journal article" date="2019" name="Proc. Natl. Acad. Sci. U.S.A.">
        <title>Structural basis for substrate binding and specificity of a sodium-alanine symporter AgcS.</title>
        <authorList>
            <person name="Ma J."/>
            <person name="Lei H.T."/>
            <person name="Reyes F.E."/>
            <person name="Sanchez-Martinez S."/>
            <person name="Sarhan M.F."/>
            <person name="Hattne J."/>
            <person name="Gonen T."/>
        </authorList>
    </citation>
    <scope>X-RAY CRYSTALLOGRAPHY (3.24 ANGSTROMS) IN COMPLEXES WITH L-ALANINE AND D-ALANINE</scope>
    <scope>FUNCTION</scope>
    <scope>CATALYTIC ACTIVITY</scope>
    <scope>SUBCELLULAR LOCATION</scope>
    <scope>TOPOLOGY</scope>
    <scope>DOMAIN</scope>
    <scope>MUTAGENESIS OF ASN-80; ILE-165; PHE-273; SER-274; ASP-308 AND TRP-370</scope>
</reference>
<dbReference type="EMBL" id="BX950229">
    <property type="protein sequence ID" value="CAF31067.1"/>
    <property type="molecule type" value="Genomic_DNA"/>
</dbReference>
<dbReference type="RefSeq" id="WP_011171455.1">
    <property type="nucleotide sequence ID" value="NC_005791.1"/>
</dbReference>
<dbReference type="PDB" id="6CSE">
    <property type="method" value="X-ray"/>
    <property type="resolution" value="3.24 A"/>
    <property type="chains" value="C/M=1-453"/>
</dbReference>
<dbReference type="PDB" id="6CSF">
    <property type="method" value="X-ray"/>
    <property type="resolution" value="3.30 A"/>
    <property type="chains" value="C/M=1-453"/>
</dbReference>
<dbReference type="PDBsum" id="6CSE"/>
<dbReference type="PDBsum" id="6CSF"/>
<dbReference type="SMR" id="Q6LX42"/>
<dbReference type="STRING" id="267377.MMP1511"/>
<dbReference type="TCDB" id="2.A.25.1.3">
    <property type="family name" value="the alanine or glycine:cation symporter (agcs) family"/>
</dbReference>
<dbReference type="ABCD" id="Q6LX42">
    <property type="antibodies" value="1 sequenced antibody"/>
</dbReference>
<dbReference type="EnsemblBacteria" id="CAF31067">
    <property type="protein sequence ID" value="CAF31067"/>
    <property type="gene ID" value="MMP1511"/>
</dbReference>
<dbReference type="GeneID" id="2761075"/>
<dbReference type="KEGG" id="mmp:MMP1511"/>
<dbReference type="PATRIC" id="fig|267377.15.peg.1548"/>
<dbReference type="eggNOG" id="arCOG05006">
    <property type="taxonomic scope" value="Archaea"/>
</dbReference>
<dbReference type="HOGENOM" id="CLU_024867_1_2_2"/>
<dbReference type="OrthoDB" id="77152at2157"/>
<dbReference type="Proteomes" id="UP000000590">
    <property type="component" value="Chromosome"/>
</dbReference>
<dbReference type="GO" id="GO:0005886">
    <property type="term" value="C:plasma membrane"/>
    <property type="evidence" value="ECO:0007669"/>
    <property type="project" value="UniProtKB-SubCell"/>
</dbReference>
<dbReference type="GO" id="GO:0005283">
    <property type="term" value="F:amino acid:sodium symporter activity"/>
    <property type="evidence" value="ECO:0007669"/>
    <property type="project" value="InterPro"/>
</dbReference>
<dbReference type="FunFam" id="1.20.1740.10:FF:000004">
    <property type="entry name" value="Sodium:alanine symporter family protein"/>
    <property type="match status" value="1"/>
</dbReference>
<dbReference type="Gene3D" id="1.20.1740.10">
    <property type="entry name" value="Amino acid/polyamine transporter I"/>
    <property type="match status" value="1"/>
</dbReference>
<dbReference type="InterPro" id="IPR001463">
    <property type="entry name" value="Na/Ala_symport"/>
</dbReference>
<dbReference type="NCBIfam" id="TIGR00835">
    <property type="entry name" value="agcS"/>
    <property type="match status" value="1"/>
</dbReference>
<dbReference type="PANTHER" id="PTHR30330">
    <property type="entry name" value="AGSS FAMILY TRANSPORTER, SODIUM-ALANINE"/>
    <property type="match status" value="1"/>
</dbReference>
<dbReference type="PANTHER" id="PTHR30330:SF3">
    <property type="entry name" value="TRANSCRIPTIONAL REGULATOR, LRP FAMILY"/>
    <property type="match status" value="1"/>
</dbReference>
<dbReference type="Pfam" id="PF01235">
    <property type="entry name" value="Na_Ala_symp"/>
    <property type="match status" value="1"/>
</dbReference>
<dbReference type="PRINTS" id="PR00175">
    <property type="entry name" value="NAALASMPORT"/>
</dbReference>
<dbReference type="PROSITE" id="PS00873">
    <property type="entry name" value="NA_ALANINE_SYMP"/>
    <property type="match status" value="1"/>
</dbReference>
<protein>
    <recommendedName>
        <fullName evidence="3 4">Sodium/alanine symporter AgcS</fullName>
    </recommendedName>
    <alternativeName>
        <fullName evidence="3">Alanine permease</fullName>
    </alternativeName>
    <alternativeName>
        <fullName evidence="4">Alanine/glycine:cation symporter</fullName>
    </alternativeName>
</protein>
<gene>
    <name evidence="3" type="primary">agcS</name>
    <name type="ordered locus">MMP1511</name>
</gene>
<name>AGCS_METMP</name>
<keyword id="KW-0002">3D-structure</keyword>
<keyword id="KW-0029">Amino-acid transport</keyword>
<keyword id="KW-1003">Cell membrane</keyword>
<keyword id="KW-0406">Ion transport</keyword>
<keyword id="KW-0472">Membrane</keyword>
<keyword id="KW-1185">Reference proteome</keyword>
<keyword id="KW-0915">Sodium</keyword>
<keyword id="KW-0739">Sodium transport</keyword>
<keyword id="KW-0769">Symport</keyword>
<keyword id="KW-0812">Transmembrane</keyword>
<keyword id="KW-1133">Transmembrane helix</keyword>
<keyword id="KW-0813">Transport</keyword>
<comment type="function">
    <text evidence="1 2">Catalyzes the sodium-dependent uptake of extracellular D-alanine and L-alanine (PubMed:15659675, PubMed:30659158). Can also transport glycine (PubMed:30659158). Binds glycine and both enantiomers of alanine, while strictly excluding other amino acids (PubMed:30659158).</text>
</comment>
<comment type="catalytic activity">
    <reaction evidence="2 6">
        <text>D-alanine(in) + Na(+)(in) = D-alanine(out) + Na(+)(out)</text>
        <dbReference type="Rhea" id="RHEA:71447"/>
        <dbReference type="ChEBI" id="CHEBI:29101"/>
        <dbReference type="ChEBI" id="CHEBI:57416"/>
    </reaction>
    <physiologicalReaction direction="right-to-left" evidence="6 7">
        <dbReference type="Rhea" id="RHEA:71449"/>
    </physiologicalReaction>
</comment>
<comment type="catalytic activity">
    <reaction evidence="2 6">
        <text>L-alanine(in) + Na(+)(in) = L-alanine(out) + Na(+)(out)</text>
        <dbReference type="Rhea" id="RHEA:29283"/>
        <dbReference type="ChEBI" id="CHEBI:29101"/>
        <dbReference type="ChEBI" id="CHEBI:57972"/>
    </reaction>
    <physiologicalReaction direction="right-to-left" evidence="6 7">
        <dbReference type="Rhea" id="RHEA:29285"/>
    </physiologicalReaction>
</comment>
<comment type="catalytic activity">
    <reaction evidence="2">
        <text>glycine(in) + Na(+)(in) = glycine(out) + Na(+)(out)</text>
        <dbReference type="Rhea" id="RHEA:68228"/>
        <dbReference type="ChEBI" id="CHEBI:29101"/>
        <dbReference type="ChEBI" id="CHEBI:57305"/>
    </reaction>
    <physiologicalReaction direction="right-to-left" evidence="7">
        <dbReference type="Rhea" id="RHEA:68230"/>
    </physiologicalReaction>
</comment>
<comment type="subcellular location">
    <subcellularLocation>
        <location evidence="2">Cell membrane</location>
        <topology evidence="2">Multi-pass membrane protein</topology>
    </subcellularLocation>
</comment>
<comment type="domain">
    <text evidence="2">Maintains pseudo twofold symmetry even though it contains an uneven number of transmembrane domains.</text>
</comment>
<comment type="disruption phenotype">
    <text evidence="1">No growth on L- or D-alanine.</text>
</comment>
<comment type="similarity">
    <text evidence="5">Belongs to the alanine or glycine:cation symporter (AGCS) (TC 2.A.25) family.</text>
</comment>
<organism>
    <name type="scientific">Methanococcus maripaludis (strain DSM 14266 / JCM 13030 / NBRC 101832 / S2 / LL)</name>
    <dbReference type="NCBI Taxonomy" id="267377"/>
    <lineage>
        <taxon>Archaea</taxon>
        <taxon>Methanobacteriati</taxon>
        <taxon>Methanobacteriota</taxon>
        <taxon>Methanomada group</taxon>
        <taxon>Methanococci</taxon>
        <taxon>Methanococcales</taxon>
        <taxon>Methanococcaceae</taxon>
        <taxon>Methanococcus</taxon>
    </lineage>
</organism>
<proteinExistence type="evidence at protein level"/>